<name>MATK_ILLOL</name>
<keyword id="KW-0150">Chloroplast</keyword>
<keyword id="KW-0507">mRNA processing</keyword>
<keyword id="KW-0934">Plastid</keyword>
<keyword id="KW-0694">RNA-binding</keyword>
<keyword id="KW-0819">tRNA processing</keyword>
<evidence type="ECO:0000255" key="1">
    <source>
        <dbReference type="HAMAP-Rule" id="MF_01390"/>
    </source>
</evidence>
<protein>
    <recommendedName>
        <fullName evidence="1">Maturase K</fullName>
    </recommendedName>
    <alternativeName>
        <fullName evidence="1">Intron maturase</fullName>
    </alternativeName>
</protein>
<dbReference type="EMBL" id="EF380354">
    <property type="protein sequence ID" value="ABQ52500.1"/>
    <property type="molecule type" value="Genomic_DNA"/>
</dbReference>
<dbReference type="RefSeq" id="YP_001294251.1">
    <property type="nucleotide sequence ID" value="NC_009600.1"/>
</dbReference>
<dbReference type="GeneID" id="5236725"/>
<dbReference type="GO" id="GO:0009507">
    <property type="term" value="C:chloroplast"/>
    <property type="evidence" value="ECO:0007669"/>
    <property type="project" value="UniProtKB-SubCell"/>
</dbReference>
<dbReference type="GO" id="GO:0003723">
    <property type="term" value="F:RNA binding"/>
    <property type="evidence" value="ECO:0007669"/>
    <property type="project" value="UniProtKB-KW"/>
</dbReference>
<dbReference type="GO" id="GO:0006397">
    <property type="term" value="P:mRNA processing"/>
    <property type="evidence" value="ECO:0007669"/>
    <property type="project" value="UniProtKB-KW"/>
</dbReference>
<dbReference type="GO" id="GO:0008380">
    <property type="term" value="P:RNA splicing"/>
    <property type="evidence" value="ECO:0007669"/>
    <property type="project" value="UniProtKB-UniRule"/>
</dbReference>
<dbReference type="GO" id="GO:0008033">
    <property type="term" value="P:tRNA processing"/>
    <property type="evidence" value="ECO:0007669"/>
    <property type="project" value="UniProtKB-KW"/>
</dbReference>
<dbReference type="HAMAP" id="MF_01390">
    <property type="entry name" value="MatK"/>
    <property type="match status" value="1"/>
</dbReference>
<dbReference type="InterPro" id="IPR024937">
    <property type="entry name" value="Domain_X"/>
</dbReference>
<dbReference type="InterPro" id="IPR002866">
    <property type="entry name" value="Maturase_MatK"/>
</dbReference>
<dbReference type="InterPro" id="IPR024942">
    <property type="entry name" value="Maturase_MatK_N"/>
</dbReference>
<dbReference type="PANTHER" id="PTHR34811">
    <property type="entry name" value="MATURASE K"/>
    <property type="match status" value="1"/>
</dbReference>
<dbReference type="PANTHER" id="PTHR34811:SF1">
    <property type="entry name" value="MATURASE K"/>
    <property type="match status" value="1"/>
</dbReference>
<dbReference type="Pfam" id="PF01348">
    <property type="entry name" value="Intron_maturas2"/>
    <property type="match status" value="1"/>
</dbReference>
<dbReference type="Pfam" id="PF01824">
    <property type="entry name" value="MatK_N"/>
    <property type="match status" value="1"/>
</dbReference>
<proteinExistence type="inferred from homology"/>
<gene>
    <name evidence="1" type="primary">matK</name>
</gene>
<organism>
    <name type="scientific">Illicium oligandrum</name>
    <name type="common">Star anise</name>
    <dbReference type="NCBI Taxonomy" id="145286"/>
    <lineage>
        <taxon>Eukaryota</taxon>
        <taxon>Viridiplantae</taxon>
        <taxon>Streptophyta</taxon>
        <taxon>Embryophyta</taxon>
        <taxon>Tracheophyta</taxon>
        <taxon>Spermatophyta</taxon>
        <taxon>Magnoliopsida</taxon>
        <taxon>Austrobaileyales</taxon>
        <taxon>Schisandraceae</taxon>
        <taxon>Illicium</taxon>
    </lineage>
</organism>
<reference key="1">
    <citation type="journal article" date="2007" name="Mol. Phylogenet. Evol.">
        <title>Phylogenetic and evolutionary implications of complete chloroplast genome sequences of four early-diverging angiosperms: Buxus (Buxaceae), Chloranthus (Chloranthaceae), Dioscorea (Dioscoreaceae), and Illicium (Schisandraceae).</title>
        <authorList>
            <person name="Hansen D.R."/>
            <person name="Dastidar S.G."/>
            <person name="Cai Z."/>
            <person name="Penaflor C."/>
            <person name="Kuehl J.V."/>
            <person name="Boore J.L."/>
            <person name="Jansen R.K."/>
        </authorList>
    </citation>
    <scope>NUCLEOTIDE SEQUENCE [LARGE SCALE GENOMIC DNA]</scope>
</reference>
<comment type="function">
    <text evidence="1">Usually encoded in the trnK tRNA gene intron. Probably assists in splicing its own and other chloroplast group II introns.</text>
</comment>
<comment type="subcellular location">
    <subcellularLocation>
        <location>Plastid</location>
        <location>Chloroplast</location>
    </subcellularLocation>
</comment>
<comment type="similarity">
    <text evidence="1">Belongs to the intron maturase 2 family. MatK subfamily.</text>
</comment>
<accession>A6MMS5</accession>
<feature type="chain" id="PRO_0000355939" description="Maturase K">
    <location>
        <begin position="1"/>
        <end position="505"/>
    </location>
</feature>
<sequence>MEELQGYLGIDRSCQQRFLYPLLFQESIYALAHDYGLNGSILYEPIENLGYDNKPSLLIVKRLIIRMHQQNLFFILVNGSNQNRFVGHNRSFYSQMISEGFAGIVEIPLSMRLASSLEQIAKSHNLRSIHSIFPFLEDKFSHLNHVSDILIPHPVHLEILVQTLRRWIQDAPSLHLLRFFLHGHPNWNSLITPKKSISLFSKENPRFFLFLYNSYVYEYESILVFLHKQSSHLRSISSGAFLERTNFYGKTEHLLVVLRNDFQKTLWLWLFKDPFMHYARYQGKAIMASKGTHLLMKKWKYHLVNFWQLHFYLWSQSGRIRINELSNHFFYFPGYLSGIRLNPSVVRGQMIENSFMIDTGIKKFDMIVPIIPLIGSLVKAKFCNISGYPISKSVRADSSNSDIINRFGRICRNLSHYHSGSSKKHNLYRIKYILRLSCAKTLARKHKSTVRTILKRLGSELLEEFLTEKEEILSLISPRTSSPPHREEGIWYLDIIHIHGMSNHS</sequence>
<geneLocation type="chloroplast"/>